<reference key="1">
    <citation type="journal article" date="2009" name="J. Bacteriol.">
        <title>Complete genome sequence and comparative genome analysis of enteropathogenic Escherichia coli O127:H6 strain E2348/69.</title>
        <authorList>
            <person name="Iguchi A."/>
            <person name="Thomson N.R."/>
            <person name="Ogura Y."/>
            <person name="Saunders D."/>
            <person name="Ooka T."/>
            <person name="Henderson I.R."/>
            <person name="Harris D."/>
            <person name="Asadulghani M."/>
            <person name="Kurokawa K."/>
            <person name="Dean P."/>
            <person name="Kenny B."/>
            <person name="Quail M.A."/>
            <person name="Thurston S."/>
            <person name="Dougan G."/>
            <person name="Hayashi T."/>
            <person name="Parkhill J."/>
            <person name="Frankel G."/>
        </authorList>
    </citation>
    <scope>NUCLEOTIDE SEQUENCE [LARGE SCALE GENOMIC DNA]</scope>
    <source>
        <strain>E2348/69 / EPEC</strain>
    </source>
</reference>
<feature type="chain" id="PRO_1000190201" description="Glycine cleavage system H protein">
    <location>
        <begin position="1"/>
        <end position="129"/>
    </location>
</feature>
<feature type="domain" description="Lipoyl-binding" evidence="2">
    <location>
        <begin position="24"/>
        <end position="106"/>
    </location>
</feature>
<feature type="modified residue" description="N6-lipoyllysine" evidence="1">
    <location>
        <position position="65"/>
    </location>
</feature>
<accession>B7UHV2</accession>
<keyword id="KW-0450">Lipoyl</keyword>
<keyword id="KW-1185">Reference proteome</keyword>
<dbReference type="EMBL" id="FM180568">
    <property type="protein sequence ID" value="CAS10704.1"/>
    <property type="molecule type" value="Genomic_DNA"/>
</dbReference>
<dbReference type="RefSeq" id="WP_001339295.1">
    <property type="nucleotide sequence ID" value="NC_011601.1"/>
</dbReference>
<dbReference type="SMR" id="B7UHV2"/>
<dbReference type="KEGG" id="ecg:E2348C_3156"/>
<dbReference type="HOGENOM" id="CLU_097408_2_1_6"/>
<dbReference type="Proteomes" id="UP000008205">
    <property type="component" value="Chromosome"/>
</dbReference>
<dbReference type="GO" id="GO:0005829">
    <property type="term" value="C:cytosol"/>
    <property type="evidence" value="ECO:0007669"/>
    <property type="project" value="TreeGrafter"/>
</dbReference>
<dbReference type="GO" id="GO:0005960">
    <property type="term" value="C:glycine cleavage complex"/>
    <property type="evidence" value="ECO:0007669"/>
    <property type="project" value="InterPro"/>
</dbReference>
<dbReference type="GO" id="GO:0019464">
    <property type="term" value="P:glycine decarboxylation via glycine cleavage system"/>
    <property type="evidence" value="ECO:0007669"/>
    <property type="project" value="UniProtKB-UniRule"/>
</dbReference>
<dbReference type="CDD" id="cd06848">
    <property type="entry name" value="GCS_H"/>
    <property type="match status" value="1"/>
</dbReference>
<dbReference type="FunFam" id="2.40.50.100:FF:000011">
    <property type="entry name" value="Glycine cleavage system H protein"/>
    <property type="match status" value="1"/>
</dbReference>
<dbReference type="Gene3D" id="2.40.50.100">
    <property type="match status" value="1"/>
</dbReference>
<dbReference type="HAMAP" id="MF_00272">
    <property type="entry name" value="GcvH"/>
    <property type="match status" value="1"/>
</dbReference>
<dbReference type="InterPro" id="IPR003016">
    <property type="entry name" value="2-oxoA_DH_lipoyl-BS"/>
</dbReference>
<dbReference type="InterPro" id="IPR000089">
    <property type="entry name" value="Biotin_lipoyl"/>
</dbReference>
<dbReference type="InterPro" id="IPR002930">
    <property type="entry name" value="GCV_H"/>
</dbReference>
<dbReference type="InterPro" id="IPR033753">
    <property type="entry name" value="GCV_H/Fam206"/>
</dbReference>
<dbReference type="InterPro" id="IPR017453">
    <property type="entry name" value="GCV_H_sub"/>
</dbReference>
<dbReference type="InterPro" id="IPR011053">
    <property type="entry name" value="Single_hybrid_motif"/>
</dbReference>
<dbReference type="NCBIfam" id="TIGR00527">
    <property type="entry name" value="gcvH"/>
    <property type="match status" value="1"/>
</dbReference>
<dbReference type="NCBIfam" id="NF002270">
    <property type="entry name" value="PRK01202.1"/>
    <property type="match status" value="1"/>
</dbReference>
<dbReference type="PANTHER" id="PTHR11715">
    <property type="entry name" value="GLYCINE CLEAVAGE SYSTEM H PROTEIN"/>
    <property type="match status" value="1"/>
</dbReference>
<dbReference type="PANTHER" id="PTHR11715:SF3">
    <property type="entry name" value="GLYCINE CLEAVAGE SYSTEM H PROTEIN-RELATED"/>
    <property type="match status" value="1"/>
</dbReference>
<dbReference type="Pfam" id="PF01597">
    <property type="entry name" value="GCV_H"/>
    <property type="match status" value="1"/>
</dbReference>
<dbReference type="SUPFAM" id="SSF51230">
    <property type="entry name" value="Single hybrid motif"/>
    <property type="match status" value="1"/>
</dbReference>
<dbReference type="PROSITE" id="PS50968">
    <property type="entry name" value="BIOTINYL_LIPOYL"/>
    <property type="match status" value="1"/>
</dbReference>
<dbReference type="PROSITE" id="PS00189">
    <property type="entry name" value="LIPOYL"/>
    <property type="match status" value="1"/>
</dbReference>
<organism>
    <name type="scientific">Escherichia coli O127:H6 (strain E2348/69 / EPEC)</name>
    <dbReference type="NCBI Taxonomy" id="574521"/>
    <lineage>
        <taxon>Bacteria</taxon>
        <taxon>Pseudomonadati</taxon>
        <taxon>Pseudomonadota</taxon>
        <taxon>Gammaproteobacteria</taxon>
        <taxon>Enterobacterales</taxon>
        <taxon>Enterobacteriaceae</taxon>
        <taxon>Escherichia</taxon>
    </lineage>
</organism>
<comment type="function">
    <text evidence="1">The glycine cleavage system catalyzes the degradation of glycine. The H protein shuttles the methylamine group of glycine from the P protein to the T protein.</text>
</comment>
<comment type="cofactor">
    <cofactor evidence="1">
        <name>(R)-lipoate</name>
        <dbReference type="ChEBI" id="CHEBI:83088"/>
    </cofactor>
    <text evidence="1">Binds 1 lipoyl cofactor covalently.</text>
</comment>
<comment type="subunit">
    <text evidence="1">The glycine cleavage system is composed of four proteins: P, T, L and H.</text>
</comment>
<comment type="similarity">
    <text evidence="1">Belongs to the GcvH family.</text>
</comment>
<proteinExistence type="inferred from homology"/>
<protein>
    <recommendedName>
        <fullName evidence="1">Glycine cleavage system H protein</fullName>
    </recommendedName>
</protein>
<gene>
    <name evidence="1" type="primary">gcvH</name>
    <name type="ordered locus">E2348C_3156</name>
</gene>
<name>GCSH_ECO27</name>
<evidence type="ECO:0000255" key="1">
    <source>
        <dbReference type="HAMAP-Rule" id="MF_00272"/>
    </source>
</evidence>
<evidence type="ECO:0000255" key="2">
    <source>
        <dbReference type="PROSITE-ProRule" id="PRU01066"/>
    </source>
</evidence>
<sequence>MSNVPAELKYSKEHEWLRKEAYGTYTVGITEHAQELLGDMVFVDLPEVGATVSAGDDCAVAESVKAASDIYAPVSGEIVAVNDALSDSPELVNSEPYAGGWIFKIKASDESELESLLDATAYEALLEDE</sequence>